<keyword id="KW-1185">Reference proteome</keyword>
<organism>
    <name type="scientific">Bacillus subtilis (strain 168)</name>
    <dbReference type="NCBI Taxonomy" id="224308"/>
    <lineage>
        <taxon>Bacteria</taxon>
        <taxon>Bacillati</taxon>
        <taxon>Bacillota</taxon>
        <taxon>Bacilli</taxon>
        <taxon>Bacillales</taxon>
        <taxon>Bacillaceae</taxon>
        <taxon>Bacillus</taxon>
    </lineage>
</organism>
<sequence length="59" mass="7019">MNTNMSGGRRSMPKRKVKTYQQLIQENKEAIMGNPKLMNVIYDRIDRKHQKNLQEQNNT</sequence>
<protein>
    <recommendedName>
        <fullName>Uncharacterized protein YdbN</fullName>
    </recommendedName>
</protein>
<name>YDBN_BACSU</name>
<gene>
    <name type="primary">ydbN</name>
    <name type="ordered locus">BSU04530</name>
</gene>
<reference key="1">
    <citation type="submission" date="1997-03" db="EMBL/GenBank/DDBJ databases">
        <title>A 148 kbp sequence of the region between 35 and 47 degree of the Bacillus subtilis genome.</title>
        <authorList>
            <person name="Kasahara Y."/>
            <person name="Nakai S."/>
            <person name="Lee S."/>
            <person name="Sadaie Y."/>
            <person name="Ogasawara N."/>
        </authorList>
    </citation>
    <scope>NUCLEOTIDE SEQUENCE [GENOMIC DNA]</scope>
    <source>
        <strain>168</strain>
    </source>
</reference>
<reference key="2">
    <citation type="journal article" date="1997" name="Nature">
        <title>The complete genome sequence of the Gram-positive bacterium Bacillus subtilis.</title>
        <authorList>
            <person name="Kunst F."/>
            <person name="Ogasawara N."/>
            <person name="Moszer I."/>
            <person name="Albertini A.M."/>
            <person name="Alloni G."/>
            <person name="Azevedo V."/>
            <person name="Bertero M.G."/>
            <person name="Bessieres P."/>
            <person name="Bolotin A."/>
            <person name="Borchert S."/>
            <person name="Borriss R."/>
            <person name="Boursier L."/>
            <person name="Brans A."/>
            <person name="Braun M."/>
            <person name="Brignell S.C."/>
            <person name="Bron S."/>
            <person name="Brouillet S."/>
            <person name="Bruschi C.V."/>
            <person name="Caldwell B."/>
            <person name="Capuano V."/>
            <person name="Carter N.M."/>
            <person name="Choi S.-K."/>
            <person name="Codani J.-J."/>
            <person name="Connerton I.F."/>
            <person name="Cummings N.J."/>
            <person name="Daniel R.A."/>
            <person name="Denizot F."/>
            <person name="Devine K.M."/>
            <person name="Duesterhoeft A."/>
            <person name="Ehrlich S.D."/>
            <person name="Emmerson P.T."/>
            <person name="Entian K.-D."/>
            <person name="Errington J."/>
            <person name="Fabret C."/>
            <person name="Ferrari E."/>
            <person name="Foulger D."/>
            <person name="Fritz C."/>
            <person name="Fujita M."/>
            <person name="Fujita Y."/>
            <person name="Fuma S."/>
            <person name="Galizzi A."/>
            <person name="Galleron N."/>
            <person name="Ghim S.-Y."/>
            <person name="Glaser P."/>
            <person name="Goffeau A."/>
            <person name="Golightly E.J."/>
            <person name="Grandi G."/>
            <person name="Guiseppi G."/>
            <person name="Guy B.J."/>
            <person name="Haga K."/>
            <person name="Haiech J."/>
            <person name="Harwood C.R."/>
            <person name="Henaut A."/>
            <person name="Hilbert H."/>
            <person name="Holsappel S."/>
            <person name="Hosono S."/>
            <person name="Hullo M.-F."/>
            <person name="Itaya M."/>
            <person name="Jones L.-M."/>
            <person name="Joris B."/>
            <person name="Karamata D."/>
            <person name="Kasahara Y."/>
            <person name="Klaerr-Blanchard M."/>
            <person name="Klein C."/>
            <person name="Kobayashi Y."/>
            <person name="Koetter P."/>
            <person name="Koningstein G."/>
            <person name="Krogh S."/>
            <person name="Kumano M."/>
            <person name="Kurita K."/>
            <person name="Lapidus A."/>
            <person name="Lardinois S."/>
            <person name="Lauber J."/>
            <person name="Lazarevic V."/>
            <person name="Lee S.-M."/>
            <person name="Levine A."/>
            <person name="Liu H."/>
            <person name="Masuda S."/>
            <person name="Mauel C."/>
            <person name="Medigue C."/>
            <person name="Medina N."/>
            <person name="Mellado R.P."/>
            <person name="Mizuno M."/>
            <person name="Moestl D."/>
            <person name="Nakai S."/>
            <person name="Noback M."/>
            <person name="Noone D."/>
            <person name="O'Reilly M."/>
            <person name="Ogawa K."/>
            <person name="Ogiwara A."/>
            <person name="Oudega B."/>
            <person name="Park S.-H."/>
            <person name="Parro V."/>
            <person name="Pohl T.M."/>
            <person name="Portetelle D."/>
            <person name="Porwollik S."/>
            <person name="Prescott A.M."/>
            <person name="Presecan E."/>
            <person name="Pujic P."/>
            <person name="Purnelle B."/>
            <person name="Rapoport G."/>
            <person name="Rey M."/>
            <person name="Reynolds S."/>
            <person name="Rieger M."/>
            <person name="Rivolta C."/>
            <person name="Rocha E."/>
            <person name="Roche B."/>
            <person name="Rose M."/>
            <person name="Sadaie Y."/>
            <person name="Sato T."/>
            <person name="Scanlan E."/>
            <person name="Schleich S."/>
            <person name="Schroeter R."/>
            <person name="Scoffone F."/>
            <person name="Sekiguchi J."/>
            <person name="Sekowska A."/>
            <person name="Seror S.J."/>
            <person name="Serror P."/>
            <person name="Shin B.-S."/>
            <person name="Soldo B."/>
            <person name="Sorokin A."/>
            <person name="Tacconi E."/>
            <person name="Takagi T."/>
            <person name="Takahashi H."/>
            <person name="Takemaru K."/>
            <person name="Takeuchi M."/>
            <person name="Tamakoshi A."/>
            <person name="Tanaka T."/>
            <person name="Terpstra P."/>
            <person name="Tognoni A."/>
            <person name="Tosato V."/>
            <person name="Uchiyama S."/>
            <person name="Vandenbol M."/>
            <person name="Vannier F."/>
            <person name="Vassarotti A."/>
            <person name="Viari A."/>
            <person name="Wambutt R."/>
            <person name="Wedler E."/>
            <person name="Wedler H."/>
            <person name="Weitzenegger T."/>
            <person name="Winters P."/>
            <person name="Wipat A."/>
            <person name="Yamamoto H."/>
            <person name="Yamane K."/>
            <person name="Yasumoto K."/>
            <person name="Yata K."/>
            <person name="Yoshida K."/>
            <person name="Yoshikawa H.-F."/>
            <person name="Zumstein E."/>
            <person name="Yoshikawa H."/>
            <person name="Danchin A."/>
        </authorList>
    </citation>
    <scope>NUCLEOTIDE SEQUENCE [LARGE SCALE GENOMIC DNA]</scope>
    <source>
        <strain>168</strain>
    </source>
</reference>
<proteinExistence type="predicted"/>
<feature type="chain" id="PRO_0000049490" description="Uncharacterized protein YdbN">
    <location>
        <begin position="1"/>
        <end position="59"/>
    </location>
</feature>
<dbReference type="EMBL" id="AB001488">
    <property type="protein sequence ID" value="BAA19290.1"/>
    <property type="molecule type" value="Genomic_DNA"/>
</dbReference>
<dbReference type="EMBL" id="AL009126">
    <property type="protein sequence ID" value="CAB12260.1"/>
    <property type="molecule type" value="Genomic_DNA"/>
</dbReference>
<dbReference type="PIR" id="A69772">
    <property type="entry name" value="A69772"/>
</dbReference>
<dbReference type="SMR" id="P96609"/>
<dbReference type="FunCoup" id="P96609">
    <property type="interactions" value="36"/>
</dbReference>
<dbReference type="STRING" id="224308.BSU04530"/>
<dbReference type="PaxDb" id="224308-BSU04530"/>
<dbReference type="EnsemblBacteria" id="CAB12260">
    <property type="protein sequence ID" value="CAB12260"/>
    <property type="gene ID" value="BSU_04530"/>
</dbReference>
<dbReference type="GeneID" id="938190"/>
<dbReference type="KEGG" id="bsu:BSU04530"/>
<dbReference type="PATRIC" id="fig|224308.43.peg.472"/>
<dbReference type="eggNOG" id="ENOG5030DJB">
    <property type="taxonomic scope" value="Bacteria"/>
</dbReference>
<dbReference type="InParanoid" id="P96609"/>
<dbReference type="OrthoDB" id="2915249at2"/>
<dbReference type="BioCyc" id="BSUB:BSU04530-MONOMER"/>
<dbReference type="Proteomes" id="UP000001570">
    <property type="component" value="Chromosome"/>
</dbReference>
<dbReference type="InterPro" id="IPR025004">
    <property type="entry name" value="SenN/SenS"/>
</dbReference>
<dbReference type="NCBIfam" id="NF033227">
    <property type="entry name" value="Fur_reg_FbpB"/>
    <property type="match status" value="1"/>
</dbReference>
<dbReference type="Pfam" id="PF13040">
    <property type="entry name" value="Fur_reg_FbpB"/>
    <property type="match status" value="1"/>
</dbReference>
<accession>P96609</accession>